<gene>
    <name type="ordered locus">BOV_A0352</name>
</gene>
<sequence>MRLRNFYSALALSAAVFAGPLYAAAPAMAAGTISGGFDVGPGGFQGNFNPLAATGGFTWLVTYFEPLVIYDDKLENIVGDLAKSFEISPDQLTYTFKLAHAKWHDGEPFTSKDAKFTFDLARNGKTGSVFAARLASIASVETPDEKTVVIKLKEPSPSMLDTLTKVMMLPEHALASIPPEQLAKNAWWSSTPIGTGPFKFNKYVADQYVELTANPDYRGGRPQVDKLINRYFADPAAAIAALRSGEIQFTYVDSNDVSTFSSDSAFRVIEGDSFVVNYVGFNQEVPLWKDLKVRQAFMHAINRDAIIQSLYGGAAKPANCVYVADRLVPKAIDAYAYDPQKARQLLDEAGWDKINGSKPITILTYYNSPLVANVLAAMQAMLAQVGINIVPRTVDTPTYNSIVYKQGGTADEFPLIFAGLQNGPDPSSINIGLNEKQIPPAGSNIMRIRMPAVTKALDAALAETNPAKRDARYQDVCKATNANLPWGTMWVANRYGVASSKLENFIWTPAPAGGPYQAHPEKWAILE</sequence>
<evidence type="ECO:0000250" key="1"/>
<evidence type="ECO:0000255" key="2"/>
<evidence type="ECO:0000305" key="3"/>
<accession>A5VU91</accession>
<protein>
    <recommendedName>
        <fullName>Putative ABC transporter peptide-binding protein BOV_A0352</fullName>
    </recommendedName>
</protein>
<dbReference type="EMBL" id="CP000709">
    <property type="protein sequence ID" value="ABQ62717.1"/>
    <property type="molecule type" value="Genomic_DNA"/>
</dbReference>
<dbReference type="RefSeq" id="WP_002966198.1">
    <property type="nucleotide sequence ID" value="NC_009504.1"/>
</dbReference>
<dbReference type="SMR" id="A5VU91"/>
<dbReference type="KEGG" id="bov:BOV_A0352"/>
<dbReference type="HOGENOM" id="CLU_017028_7_3_5"/>
<dbReference type="Proteomes" id="UP000006383">
    <property type="component" value="Chromosome II"/>
</dbReference>
<dbReference type="GO" id="GO:0043190">
    <property type="term" value="C:ATP-binding cassette (ABC) transporter complex"/>
    <property type="evidence" value="ECO:0007669"/>
    <property type="project" value="InterPro"/>
</dbReference>
<dbReference type="GO" id="GO:0030288">
    <property type="term" value="C:outer membrane-bounded periplasmic space"/>
    <property type="evidence" value="ECO:0007669"/>
    <property type="project" value="UniProtKB-ARBA"/>
</dbReference>
<dbReference type="GO" id="GO:1904680">
    <property type="term" value="F:peptide transmembrane transporter activity"/>
    <property type="evidence" value="ECO:0007669"/>
    <property type="project" value="TreeGrafter"/>
</dbReference>
<dbReference type="GO" id="GO:0015833">
    <property type="term" value="P:peptide transport"/>
    <property type="evidence" value="ECO:0007669"/>
    <property type="project" value="UniProtKB-KW"/>
</dbReference>
<dbReference type="GO" id="GO:0015031">
    <property type="term" value="P:protein transport"/>
    <property type="evidence" value="ECO:0007669"/>
    <property type="project" value="UniProtKB-KW"/>
</dbReference>
<dbReference type="CDD" id="cd00995">
    <property type="entry name" value="PBP2_NikA_DppA_OppA_like"/>
    <property type="match status" value="1"/>
</dbReference>
<dbReference type="Gene3D" id="3.90.76.10">
    <property type="entry name" value="Dipeptide-binding Protein, Domain 1"/>
    <property type="match status" value="1"/>
</dbReference>
<dbReference type="Gene3D" id="3.10.105.10">
    <property type="entry name" value="Dipeptide-binding Protein, Domain 3"/>
    <property type="match status" value="1"/>
</dbReference>
<dbReference type="Gene3D" id="3.40.190.10">
    <property type="entry name" value="Periplasmic binding protein-like II"/>
    <property type="match status" value="1"/>
</dbReference>
<dbReference type="InterPro" id="IPR030678">
    <property type="entry name" value="Peptide/Ni-bd"/>
</dbReference>
<dbReference type="InterPro" id="IPR039424">
    <property type="entry name" value="SBP_5"/>
</dbReference>
<dbReference type="InterPro" id="IPR000914">
    <property type="entry name" value="SBP_5_dom"/>
</dbReference>
<dbReference type="PANTHER" id="PTHR30290">
    <property type="entry name" value="PERIPLASMIC BINDING COMPONENT OF ABC TRANSPORTER"/>
    <property type="match status" value="1"/>
</dbReference>
<dbReference type="Pfam" id="PF00496">
    <property type="entry name" value="SBP_bac_5"/>
    <property type="match status" value="1"/>
</dbReference>
<dbReference type="PIRSF" id="PIRSF002741">
    <property type="entry name" value="MppA"/>
    <property type="match status" value="1"/>
</dbReference>
<dbReference type="SUPFAM" id="SSF53850">
    <property type="entry name" value="Periplasmic binding protein-like II"/>
    <property type="match status" value="1"/>
</dbReference>
<proteinExistence type="inferred from homology"/>
<reference key="1">
    <citation type="journal article" date="2009" name="PLoS ONE">
        <title>Genome degradation in Brucella ovis corresponds with narrowing of its host range and tissue tropism.</title>
        <authorList>
            <person name="Tsolis R.M."/>
            <person name="Seshadri R."/>
            <person name="Santos R.L."/>
            <person name="Sangari F.J."/>
            <person name="Lobo J.M."/>
            <person name="de Jong M.F."/>
            <person name="Ren Q."/>
            <person name="Myers G."/>
            <person name="Brinkac L.M."/>
            <person name="Nelson W.C."/>
            <person name="Deboy R.T."/>
            <person name="Angiuoli S."/>
            <person name="Khouri H."/>
            <person name="Dimitrov G."/>
            <person name="Robinson J.R."/>
            <person name="Mulligan S."/>
            <person name="Walker R.L."/>
            <person name="Elzer P.E."/>
            <person name="Hassan K.A."/>
            <person name="Paulsen I.T."/>
        </authorList>
    </citation>
    <scope>NUCLEOTIDE SEQUENCE [LARGE SCALE GENOMIC DNA]</scope>
    <source>
        <strain>ATCC 25840 / 63/290 / NCTC 10512</strain>
    </source>
</reference>
<name>Y2552_BRUO2</name>
<organism>
    <name type="scientific">Brucella ovis (strain ATCC 25840 / 63/290 / NCTC 10512)</name>
    <dbReference type="NCBI Taxonomy" id="444178"/>
    <lineage>
        <taxon>Bacteria</taxon>
        <taxon>Pseudomonadati</taxon>
        <taxon>Pseudomonadota</taxon>
        <taxon>Alphaproteobacteria</taxon>
        <taxon>Hyphomicrobiales</taxon>
        <taxon>Brucellaceae</taxon>
        <taxon>Brucella/Ochrobactrum group</taxon>
        <taxon>Brucella</taxon>
    </lineage>
</organism>
<comment type="function">
    <text evidence="1">Probably part of an ABC transporter complex that could be involved in peptide import.</text>
</comment>
<comment type="subunit">
    <text evidence="3">The complex is composed of two ATP-binding proteins (BOV_A0347 and BOV_A0348), two transmembrane proteins (BOV_A0350 and BOV_A0351) and a solute-binding protein (BOV_A0352).</text>
</comment>
<comment type="subcellular location">
    <subcellularLocation>
        <location evidence="3">Periplasm</location>
    </subcellularLocation>
</comment>
<comment type="similarity">
    <text evidence="3">Belongs to the bacterial solute-binding protein 5 family.</text>
</comment>
<keyword id="KW-0571">Peptide transport</keyword>
<keyword id="KW-0574">Periplasm</keyword>
<keyword id="KW-0653">Protein transport</keyword>
<keyword id="KW-0732">Signal</keyword>
<keyword id="KW-0813">Transport</keyword>
<feature type="signal peptide" evidence="2">
    <location>
        <begin position="1"/>
        <end position="23"/>
    </location>
</feature>
<feature type="chain" id="PRO_0000328706" description="Putative ABC transporter peptide-binding protein BOV_A0352">
    <location>
        <begin position="24"/>
        <end position="527"/>
    </location>
</feature>